<organism>
    <name type="scientific">Oceanobacillus iheyensis (strain DSM 14371 / CIP 107618 / JCM 11309 / KCTC 3954 / HTE831)</name>
    <dbReference type="NCBI Taxonomy" id="221109"/>
    <lineage>
        <taxon>Bacteria</taxon>
        <taxon>Bacillati</taxon>
        <taxon>Bacillota</taxon>
        <taxon>Bacilli</taxon>
        <taxon>Bacillales</taxon>
        <taxon>Bacillaceae</taxon>
        <taxon>Oceanobacillus</taxon>
    </lineage>
</organism>
<name>MURE1_OCEIH</name>
<feature type="chain" id="PRO_0000101918" description="UDP-N-acetylmuramoyl-L-alanyl-D-glutamate--2,6-diaminopimelate ligase">
    <location>
        <begin position="1"/>
        <end position="493"/>
    </location>
</feature>
<feature type="short sequence motif" description="Meso-diaminopimelate recognition motif">
    <location>
        <begin position="410"/>
        <end position="413"/>
    </location>
</feature>
<feature type="binding site" evidence="1">
    <location>
        <position position="31"/>
    </location>
    <ligand>
        <name>UDP-N-acetyl-alpha-D-muramoyl-L-alanyl-D-glutamate</name>
        <dbReference type="ChEBI" id="CHEBI:83900"/>
    </ligand>
</feature>
<feature type="binding site" evidence="2">
    <location>
        <begin position="111"/>
        <end position="117"/>
    </location>
    <ligand>
        <name>ATP</name>
        <dbReference type="ChEBI" id="CHEBI:30616"/>
    </ligand>
</feature>
<feature type="binding site" evidence="1">
    <location>
        <position position="152"/>
    </location>
    <ligand>
        <name>UDP-N-acetyl-alpha-D-muramoyl-L-alanyl-D-glutamate</name>
        <dbReference type="ChEBI" id="CHEBI:83900"/>
    </ligand>
</feature>
<feature type="binding site" evidence="1">
    <location>
        <begin position="153"/>
        <end position="154"/>
    </location>
    <ligand>
        <name>UDP-N-acetyl-alpha-D-muramoyl-L-alanyl-D-glutamate</name>
        <dbReference type="ChEBI" id="CHEBI:83900"/>
    </ligand>
</feature>
<feature type="binding site" evidence="1">
    <location>
        <position position="180"/>
    </location>
    <ligand>
        <name>UDP-N-acetyl-alpha-D-muramoyl-L-alanyl-D-glutamate</name>
        <dbReference type="ChEBI" id="CHEBI:83900"/>
    </ligand>
</feature>
<feature type="binding site" evidence="1">
    <location>
        <position position="188"/>
    </location>
    <ligand>
        <name>UDP-N-acetyl-alpha-D-muramoyl-L-alanyl-D-glutamate</name>
        <dbReference type="ChEBI" id="CHEBI:83900"/>
    </ligand>
</feature>
<feature type="binding site" evidence="1">
    <location>
        <position position="386"/>
    </location>
    <ligand>
        <name>meso-2,6-diaminopimelate</name>
        <dbReference type="ChEBI" id="CHEBI:57791"/>
    </ligand>
</feature>
<feature type="binding site" evidence="1">
    <location>
        <begin position="410"/>
        <end position="413"/>
    </location>
    <ligand>
        <name>meso-2,6-diaminopimelate</name>
        <dbReference type="ChEBI" id="CHEBI:57791"/>
    </ligand>
</feature>
<feature type="binding site" evidence="1">
    <location>
        <position position="462"/>
    </location>
    <ligand>
        <name>meso-2,6-diaminopimelate</name>
        <dbReference type="ChEBI" id="CHEBI:57791"/>
    </ligand>
</feature>
<feature type="binding site" evidence="1">
    <location>
        <position position="466"/>
    </location>
    <ligand>
        <name>meso-2,6-diaminopimelate</name>
        <dbReference type="ChEBI" id="CHEBI:57791"/>
    </ligand>
</feature>
<feature type="modified residue" description="N6-carboxylysine" evidence="1">
    <location>
        <position position="220"/>
    </location>
</feature>
<keyword id="KW-0067">ATP-binding</keyword>
<keyword id="KW-0131">Cell cycle</keyword>
<keyword id="KW-0132">Cell division</keyword>
<keyword id="KW-0133">Cell shape</keyword>
<keyword id="KW-0961">Cell wall biogenesis/degradation</keyword>
<keyword id="KW-0963">Cytoplasm</keyword>
<keyword id="KW-0436">Ligase</keyword>
<keyword id="KW-0460">Magnesium</keyword>
<keyword id="KW-0547">Nucleotide-binding</keyword>
<keyword id="KW-0573">Peptidoglycan synthesis</keyword>
<keyword id="KW-1185">Reference proteome</keyword>
<sequence>MELKKLLECLTFYNVNGEVENCEITSLEMDSRKITSGSAFVCITGFTVDGHDYVDQAVKNGASAIFTSKPLMKEYGVPIIQVEDTNRALAMLAVKYYDYPTKHFPLIGVTGTNGKTTVTYLLDKIFEYHQKKAGVIGTIQVKIGEETFPIVNTTPNALELQKTFHVMREKDVKQGIMEVSSHALDMGRVYGCDYDIAVFTNLSQDHLDYHQDIQDYLRAKSLLFAQLGNGYDSEKEKYAIINDDDSSSHLLKRSTAQHVITYSCKKEATIMAKDIELTASGIRFKLHSPLGNITIQSRLMGMFNVYNMLAASAAAIASKVPLNVIQQALESIEGVNGRFEPIVEGQNYSVIVDFAHTPDSLENVLQTIKDFAKRNVYVVVGCGGDRDRKKRPLMAEVALNYADHAVFTSDNPRTEDPQAILDDMTAELDANSGSYEVVVDRKEGIAKAIQSAQKDDIVLIAGKGHETYQIIGHTKYDFDDRDVARNAIKQKGE</sequence>
<proteinExistence type="inferred from homology"/>
<dbReference type="EC" id="6.3.2.13"/>
<dbReference type="EMBL" id="BA000028">
    <property type="protein sequence ID" value="BAC13422.1"/>
    <property type="molecule type" value="Genomic_DNA"/>
</dbReference>
<dbReference type="RefSeq" id="WP_011065867.1">
    <property type="nucleotide sequence ID" value="NC_004193.1"/>
</dbReference>
<dbReference type="SMR" id="Q8CZE6"/>
<dbReference type="STRING" id="221109.gene:10733706"/>
<dbReference type="KEGG" id="oih:OB1466"/>
<dbReference type="eggNOG" id="COG0769">
    <property type="taxonomic scope" value="Bacteria"/>
</dbReference>
<dbReference type="HOGENOM" id="CLU_022291_4_1_9"/>
<dbReference type="OrthoDB" id="9800958at2"/>
<dbReference type="PhylomeDB" id="Q8CZE6"/>
<dbReference type="UniPathway" id="UPA00219"/>
<dbReference type="Proteomes" id="UP000000822">
    <property type="component" value="Chromosome"/>
</dbReference>
<dbReference type="GO" id="GO:0005737">
    <property type="term" value="C:cytoplasm"/>
    <property type="evidence" value="ECO:0007669"/>
    <property type="project" value="UniProtKB-SubCell"/>
</dbReference>
<dbReference type="GO" id="GO:0005524">
    <property type="term" value="F:ATP binding"/>
    <property type="evidence" value="ECO:0007669"/>
    <property type="project" value="UniProtKB-UniRule"/>
</dbReference>
<dbReference type="GO" id="GO:0000287">
    <property type="term" value="F:magnesium ion binding"/>
    <property type="evidence" value="ECO:0007669"/>
    <property type="project" value="UniProtKB-UniRule"/>
</dbReference>
<dbReference type="GO" id="GO:0008765">
    <property type="term" value="F:UDP-N-acetylmuramoylalanyl-D-glutamate-2,6-diaminopimelate ligase activity"/>
    <property type="evidence" value="ECO:0007669"/>
    <property type="project" value="UniProtKB-UniRule"/>
</dbReference>
<dbReference type="GO" id="GO:0051301">
    <property type="term" value="P:cell division"/>
    <property type="evidence" value="ECO:0007669"/>
    <property type="project" value="UniProtKB-KW"/>
</dbReference>
<dbReference type="GO" id="GO:0071555">
    <property type="term" value="P:cell wall organization"/>
    <property type="evidence" value="ECO:0007669"/>
    <property type="project" value="UniProtKB-KW"/>
</dbReference>
<dbReference type="GO" id="GO:0009252">
    <property type="term" value="P:peptidoglycan biosynthetic process"/>
    <property type="evidence" value="ECO:0007669"/>
    <property type="project" value="UniProtKB-UniRule"/>
</dbReference>
<dbReference type="GO" id="GO:0008360">
    <property type="term" value="P:regulation of cell shape"/>
    <property type="evidence" value="ECO:0007669"/>
    <property type="project" value="UniProtKB-KW"/>
</dbReference>
<dbReference type="FunFam" id="3.90.190.20:FF:000006">
    <property type="entry name" value="UDP-N-acetylmuramoyl-L-alanyl-D-glutamate--2,6-diaminopimelate ligase"/>
    <property type="match status" value="1"/>
</dbReference>
<dbReference type="Gene3D" id="3.90.190.20">
    <property type="entry name" value="Mur ligase, C-terminal domain"/>
    <property type="match status" value="1"/>
</dbReference>
<dbReference type="Gene3D" id="3.40.1190.10">
    <property type="entry name" value="Mur-like, catalytic domain"/>
    <property type="match status" value="1"/>
</dbReference>
<dbReference type="Gene3D" id="3.40.1390.10">
    <property type="entry name" value="MurE/MurF, N-terminal domain"/>
    <property type="match status" value="1"/>
</dbReference>
<dbReference type="HAMAP" id="MF_00208">
    <property type="entry name" value="MurE"/>
    <property type="match status" value="1"/>
</dbReference>
<dbReference type="InterPro" id="IPR036565">
    <property type="entry name" value="Mur-like_cat_sf"/>
</dbReference>
<dbReference type="InterPro" id="IPR004101">
    <property type="entry name" value="Mur_ligase_C"/>
</dbReference>
<dbReference type="InterPro" id="IPR036615">
    <property type="entry name" value="Mur_ligase_C_dom_sf"/>
</dbReference>
<dbReference type="InterPro" id="IPR013221">
    <property type="entry name" value="Mur_ligase_cen"/>
</dbReference>
<dbReference type="InterPro" id="IPR000713">
    <property type="entry name" value="Mur_ligase_N"/>
</dbReference>
<dbReference type="InterPro" id="IPR035911">
    <property type="entry name" value="MurE/MurF_N"/>
</dbReference>
<dbReference type="InterPro" id="IPR005761">
    <property type="entry name" value="UDP-N-AcMur-Glu-dNH2Pim_ligase"/>
</dbReference>
<dbReference type="NCBIfam" id="TIGR01085">
    <property type="entry name" value="murE"/>
    <property type="match status" value="1"/>
</dbReference>
<dbReference type="NCBIfam" id="NF001124">
    <property type="entry name" value="PRK00139.1-2"/>
    <property type="match status" value="1"/>
</dbReference>
<dbReference type="NCBIfam" id="NF001126">
    <property type="entry name" value="PRK00139.1-4"/>
    <property type="match status" value="1"/>
</dbReference>
<dbReference type="PANTHER" id="PTHR23135">
    <property type="entry name" value="MUR LIGASE FAMILY MEMBER"/>
    <property type="match status" value="1"/>
</dbReference>
<dbReference type="PANTHER" id="PTHR23135:SF4">
    <property type="entry name" value="UDP-N-ACETYLMURAMOYL-L-ALANYL-D-GLUTAMATE--2,6-DIAMINOPIMELATE LIGASE MURE HOMOLOG, CHLOROPLASTIC"/>
    <property type="match status" value="1"/>
</dbReference>
<dbReference type="Pfam" id="PF01225">
    <property type="entry name" value="Mur_ligase"/>
    <property type="match status" value="1"/>
</dbReference>
<dbReference type="Pfam" id="PF02875">
    <property type="entry name" value="Mur_ligase_C"/>
    <property type="match status" value="1"/>
</dbReference>
<dbReference type="Pfam" id="PF08245">
    <property type="entry name" value="Mur_ligase_M"/>
    <property type="match status" value="1"/>
</dbReference>
<dbReference type="SUPFAM" id="SSF53623">
    <property type="entry name" value="MurD-like peptide ligases, catalytic domain"/>
    <property type="match status" value="1"/>
</dbReference>
<dbReference type="SUPFAM" id="SSF53244">
    <property type="entry name" value="MurD-like peptide ligases, peptide-binding domain"/>
    <property type="match status" value="1"/>
</dbReference>
<dbReference type="SUPFAM" id="SSF63418">
    <property type="entry name" value="MurE/MurF N-terminal domain"/>
    <property type="match status" value="1"/>
</dbReference>
<gene>
    <name type="primary">murE1</name>
    <name type="ordered locus">OB1466</name>
</gene>
<comment type="function">
    <text evidence="1">Catalyzes the addition of meso-diaminopimelic acid to the nucleotide precursor UDP-N-acetylmuramoyl-L-alanyl-D-glutamate (UMAG) in the biosynthesis of bacterial cell-wall peptidoglycan.</text>
</comment>
<comment type="catalytic activity">
    <reaction>
        <text>UDP-N-acetyl-alpha-D-muramoyl-L-alanyl-D-glutamate + meso-2,6-diaminopimelate + ATP = UDP-N-acetyl-alpha-D-muramoyl-L-alanyl-gamma-D-glutamyl-meso-2,6-diaminopimelate + ADP + phosphate + H(+)</text>
        <dbReference type="Rhea" id="RHEA:23676"/>
        <dbReference type="ChEBI" id="CHEBI:15378"/>
        <dbReference type="ChEBI" id="CHEBI:30616"/>
        <dbReference type="ChEBI" id="CHEBI:43474"/>
        <dbReference type="ChEBI" id="CHEBI:57791"/>
        <dbReference type="ChEBI" id="CHEBI:83900"/>
        <dbReference type="ChEBI" id="CHEBI:83905"/>
        <dbReference type="ChEBI" id="CHEBI:456216"/>
        <dbReference type="EC" id="6.3.2.13"/>
    </reaction>
</comment>
<comment type="cofactor">
    <cofactor evidence="3">
        <name>Mg(2+)</name>
        <dbReference type="ChEBI" id="CHEBI:18420"/>
    </cofactor>
</comment>
<comment type="pathway">
    <text>Cell wall biogenesis; peptidoglycan biosynthesis.</text>
</comment>
<comment type="subcellular location">
    <subcellularLocation>
        <location evidence="1">Cytoplasm</location>
    </subcellularLocation>
</comment>
<comment type="PTM">
    <text evidence="1">Carboxylation is probably crucial for Mg(2+) binding and, consequently, for the gamma-phosphate positioning of ATP.</text>
</comment>
<comment type="similarity">
    <text evidence="4">Belongs to the MurCDEF family. MurE subfamily.</text>
</comment>
<reference key="1">
    <citation type="journal article" date="2002" name="Nucleic Acids Res.">
        <title>Genome sequence of Oceanobacillus iheyensis isolated from the Iheya Ridge and its unexpected adaptive capabilities to extreme environments.</title>
        <authorList>
            <person name="Takami H."/>
            <person name="Takaki Y."/>
            <person name="Uchiyama I."/>
        </authorList>
    </citation>
    <scope>NUCLEOTIDE SEQUENCE [LARGE SCALE GENOMIC DNA]</scope>
    <source>
        <strain>DSM 14371 / CIP 107618 / JCM 11309 / KCTC 3954 / HTE831</strain>
    </source>
</reference>
<accession>Q8CZE6</accession>
<evidence type="ECO:0000250" key="1"/>
<evidence type="ECO:0000255" key="2"/>
<evidence type="ECO:0000255" key="3">
    <source>
        <dbReference type="HAMAP-Rule" id="MF_00208"/>
    </source>
</evidence>
<evidence type="ECO:0000305" key="4"/>
<protein>
    <recommendedName>
        <fullName>UDP-N-acetylmuramoyl-L-alanyl-D-glutamate--2,6-diaminopimelate ligase</fullName>
        <ecNumber>6.3.2.13</ecNumber>
    </recommendedName>
    <alternativeName>
        <fullName>Meso-A2pm-adding enzyme</fullName>
    </alternativeName>
    <alternativeName>
        <fullName>Meso-diaminopimelate-adding enzyme</fullName>
    </alternativeName>
    <alternativeName>
        <fullName>UDP-MurNAc-L-Ala-D-Glu:meso-diaminopimelate ligase</fullName>
    </alternativeName>
    <alternativeName>
        <fullName>UDP-MurNAc-tripeptide synthetase 1</fullName>
    </alternativeName>
    <alternativeName>
        <fullName>UDP-N-acetylmuramyl-tripeptide synthetase 1</fullName>
    </alternativeName>
</protein>